<evidence type="ECO:0000255" key="1">
    <source>
        <dbReference type="HAMAP-Rule" id="MF_00253"/>
    </source>
</evidence>
<protein>
    <recommendedName>
        <fullName evidence="1">Glycine--tRNA ligase</fullName>
        <ecNumber evidence="1">6.1.1.14</ecNumber>
    </recommendedName>
    <alternativeName>
        <fullName evidence="1">Glycyl-tRNA synthetase</fullName>
        <shortName evidence="1">GlyRS</shortName>
    </alternativeName>
</protein>
<name>SYG_CHLTE</name>
<sequence length="470" mass="53718">MNKLVSLAKRRGFIFPSSEIYGGLSSCFDYGPLGSEMKKNIKDLWWNAMTRRHQNIVGIDASIMMNPTVWEASGHVASFNDPMIDDKTTKRRYRADHLIENHIEKLHRDGKEAEAAAIKVAYEAAGGTEDPNRTLYNIIIEAGIKAPDTGSADWTEVRQFNLMFQCNMGAVADSAGVVYLRPETAQGIFVNFHNVREASRMKVPFGIAQIGKAFRNEIVKGNFIFRMVEFEQMEMQYFVKPGTQLEAFEAWREERFRWYSETLGMSKEKLHWYKHDKLAHYADLAYDIKFEFPFGIEEIEGIHSRTDFDLSQHQKYSGKSMEYIDQTTNERYIPYVVETSSGCDRTFLALLSDAYQEDVVDGEPRVMLKLAPKVAPVKAAVLPLMKKGEMGEKAAQLCRDLSESFMVQYDDAASIGKRYRRQDEIGTPFCFTVDHDTLENGTITVRYRDTAAQERINMSKAAEFLATKLM</sequence>
<feature type="chain" id="PRO_0000072951" description="Glycine--tRNA ligase">
    <location>
        <begin position="1"/>
        <end position="470"/>
    </location>
</feature>
<feature type="binding site" evidence="1">
    <location>
        <position position="94"/>
    </location>
    <ligand>
        <name>substrate</name>
    </ligand>
</feature>
<feature type="binding site" evidence="1">
    <location>
        <position position="183"/>
    </location>
    <ligand>
        <name>substrate</name>
    </ligand>
</feature>
<feature type="binding site" evidence="1">
    <location>
        <begin position="215"/>
        <end position="217"/>
    </location>
    <ligand>
        <name>ATP</name>
        <dbReference type="ChEBI" id="CHEBI:30616"/>
    </ligand>
</feature>
<feature type="binding site" evidence="1">
    <location>
        <begin position="225"/>
        <end position="230"/>
    </location>
    <ligand>
        <name>ATP</name>
        <dbReference type="ChEBI" id="CHEBI:30616"/>
    </ligand>
</feature>
<feature type="binding site" evidence="1">
    <location>
        <begin position="230"/>
        <end position="234"/>
    </location>
    <ligand>
        <name>substrate</name>
    </ligand>
</feature>
<feature type="binding site" evidence="1">
    <location>
        <begin position="298"/>
        <end position="299"/>
    </location>
    <ligand>
        <name>ATP</name>
        <dbReference type="ChEBI" id="CHEBI:30616"/>
    </ligand>
</feature>
<feature type="binding site" evidence="1">
    <location>
        <begin position="338"/>
        <end position="342"/>
    </location>
    <ligand>
        <name>substrate</name>
    </ligand>
</feature>
<feature type="binding site" evidence="1">
    <location>
        <begin position="342"/>
        <end position="345"/>
    </location>
    <ligand>
        <name>ATP</name>
        <dbReference type="ChEBI" id="CHEBI:30616"/>
    </ligand>
</feature>
<keyword id="KW-0030">Aminoacyl-tRNA synthetase</keyword>
<keyword id="KW-0067">ATP-binding</keyword>
<keyword id="KW-0963">Cytoplasm</keyword>
<keyword id="KW-0436">Ligase</keyword>
<keyword id="KW-0547">Nucleotide-binding</keyword>
<keyword id="KW-0648">Protein biosynthesis</keyword>
<keyword id="KW-1185">Reference proteome</keyword>
<comment type="function">
    <text evidence="1">Catalyzes the attachment of glycine to tRNA(Gly).</text>
</comment>
<comment type="catalytic activity">
    <reaction evidence="1">
        <text>tRNA(Gly) + glycine + ATP = glycyl-tRNA(Gly) + AMP + diphosphate</text>
        <dbReference type="Rhea" id="RHEA:16013"/>
        <dbReference type="Rhea" id="RHEA-COMP:9664"/>
        <dbReference type="Rhea" id="RHEA-COMP:9683"/>
        <dbReference type="ChEBI" id="CHEBI:30616"/>
        <dbReference type="ChEBI" id="CHEBI:33019"/>
        <dbReference type="ChEBI" id="CHEBI:57305"/>
        <dbReference type="ChEBI" id="CHEBI:78442"/>
        <dbReference type="ChEBI" id="CHEBI:78522"/>
        <dbReference type="ChEBI" id="CHEBI:456215"/>
        <dbReference type="EC" id="6.1.1.14"/>
    </reaction>
</comment>
<comment type="subunit">
    <text evidence="1">Homodimer.</text>
</comment>
<comment type="subcellular location">
    <subcellularLocation>
        <location evidence="1">Cytoplasm</location>
    </subcellularLocation>
</comment>
<comment type="similarity">
    <text evidence="1">Belongs to the class-II aminoacyl-tRNA synthetase family.</text>
</comment>
<organism>
    <name type="scientific">Chlorobaculum tepidum (strain ATCC 49652 / DSM 12025 / NBRC 103806 / TLS)</name>
    <name type="common">Chlorobium tepidum</name>
    <dbReference type="NCBI Taxonomy" id="194439"/>
    <lineage>
        <taxon>Bacteria</taxon>
        <taxon>Pseudomonadati</taxon>
        <taxon>Chlorobiota</taxon>
        <taxon>Chlorobiia</taxon>
        <taxon>Chlorobiales</taxon>
        <taxon>Chlorobiaceae</taxon>
        <taxon>Chlorobaculum</taxon>
    </lineage>
</organism>
<dbReference type="EC" id="6.1.1.14" evidence="1"/>
<dbReference type="EMBL" id="AE006470">
    <property type="protein sequence ID" value="AAM73470.1"/>
    <property type="molecule type" value="Genomic_DNA"/>
</dbReference>
<dbReference type="RefSeq" id="NP_663128.1">
    <property type="nucleotide sequence ID" value="NC_002932.3"/>
</dbReference>
<dbReference type="SMR" id="Q8KAB1"/>
<dbReference type="STRING" id="194439.CT2255"/>
<dbReference type="EnsemblBacteria" id="AAM73470">
    <property type="protein sequence ID" value="AAM73470"/>
    <property type="gene ID" value="CT2255"/>
</dbReference>
<dbReference type="KEGG" id="cte:CT2255"/>
<dbReference type="PATRIC" id="fig|194439.7.peg.2049"/>
<dbReference type="eggNOG" id="COG0423">
    <property type="taxonomic scope" value="Bacteria"/>
</dbReference>
<dbReference type="HOGENOM" id="CLU_015515_2_1_10"/>
<dbReference type="OrthoDB" id="9760853at2"/>
<dbReference type="Proteomes" id="UP000001007">
    <property type="component" value="Chromosome"/>
</dbReference>
<dbReference type="GO" id="GO:0005737">
    <property type="term" value="C:cytoplasm"/>
    <property type="evidence" value="ECO:0007669"/>
    <property type="project" value="UniProtKB-SubCell"/>
</dbReference>
<dbReference type="GO" id="GO:0005524">
    <property type="term" value="F:ATP binding"/>
    <property type="evidence" value="ECO:0007669"/>
    <property type="project" value="UniProtKB-UniRule"/>
</dbReference>
<dbReference type="GO" id="GO:0004820">
    <property type="term" value="F:glycine-tRNA ligase activity"/>
    <property type="evidence" value="ECO:0000250"/>
    <property type="project" value="UniProtKB"/>
</dbReference>
<dbReference type="GO" id="GO:0046983">
    <property type="term" value="F:protein dimerization activity"/>
    <property type="evidence" value="ECO:0000250"/>
    <property type="project" value="UniProtKB"/>
</dbReference>
<dbReference type="GO" id="GO:0006426">
    <property type="term" value="P:glycyl-tRNA aminoacylation"/>
    <property type="evidence" value="ECO:0007669"/>
    <property type="project" value="UniProtKB-UniRule"/>
</dbReference>
<dbReference type="CDD" id="cd00774">
    <property type="entry name" value="GlyRS-like_core"/>
    <property type="match status" value="1"/>
</dbReference>
<dbReference type="FunFam" id="3.30.40.230:FF:000011">
    <property type="entry name" value="Glycine--tRNA ligase"/>
    <property type="match status" value="1"/>
</dbReference>
<dbReference type="FunFam" id="3.40.50.800:FF:000002">
    <property type="entry name" value="Glycine--tRNA ligase"/>
    <property type="match status" value="1"/>
</dbReference>
<dbReference type="Gene3D" id="3.30.40.230">
    <property type="match status" value="1"/>
</dbReference>
<dbReference type="Gene3D" id="3.40.50.800">
    <property type="entry name" value="Anticodon-binding domain"/>
    <property type="match status" value="1"/>
</dbReference>
<dbReference type="Gene3D" id="3.30.930.10">
    <property type="entry name" value="Bira Bifunctional Protein, Domain 2"/>
    <property type="match status" value="1"/>
</dbReference>
<dbReference type="HAMAP" id="MF_00253_B">
    <property type="entry name" value="Gly_tRNA_synth_B"/>
    <property type="match status" value="1"/>
</dbReference>
<dbReference type="InterPro" id="IPR002314">
    <property type="entry name" value="aa-tRNA-synt_IIb"/>
</dbReference>
<dbReference type="InterPro" id="IPR006195">
    <property type="entry name" value="aa-tRNA-synth_II"/>
</dbReference>
<dbReference type="InterPro" id="IPR045864">
    <property type="entry name" value="aa-tRNA-synth_II/BPL/LPL"/>
</dbReference>
<dbReference type="InterPro" id="IPR004154">
    <property type="entry name" value="Anticodon-bd"/>
</dbReference>
<dbReference type="InterPro" id="IPR036621">
    <property type="entry name" value="Anticodon-bd_dom_sf"/>
</dbReference>
<dbReference type="InterPro" id="IPR027031">
    <property type="entry name" value="Gly-tRNA_synthase/POLG2"/>
</dbReference>
<dbReference type="InterPro" id="IPR022961">
    <property type="entry name" value="Gly_tRNA_ligase_bac"/>
</dbReference>
<dbReference type="InterPro" id="IPR033731">
    <property type="entry name" value="GlyRS-like_core"/>
</dbReference>
<dbReference type="InterPro" id="IPR002315">
    <property type="entry name" value="tRNA-synt_gly"/>
</dbReference>
<dbReference type="NCBIfam" id="TIGR00389">
    <property type="entry name" value="glyS_dimeric"/>
    <property type="match status" value="1"/>
</dbReference>
<dbReference type="NCBIfam" id="NF003211">
    <property type="entry name" value="PRK04173.1"/>
    <property type="match status" value="1"/>
</dbReference>
<dbReference type="PANTHER" id="PTHR10745:SF8">
    <property type="entry name" value="DNA POLYMERASE SUBUNIT GAMMA-2, MITOCHONDRIAL"/>
    <property type="match status" value="1"/>
</dbReference>
<dbReference type="PANTHER" id="PTHR10745">
    <property type="entry name" value="GLYCYL-TRNA SYNTHETASE/DNA POLYMERASE SUBUNIT GAMMA-2"/>
    <property type="match status" value="1"/>
</dbReference>
<dbReference type="Pfam" id="PF03129">
    <property type="entry name" value="HGTP_anticodon"/>
    <property type="match status" value="1"/>
</dbReference>
<dbReference type="Pfam" id="PF00587">
    <property type="entry name" value="tRNA-synt_2b"/>
    <property type="match status" value="1"/>
</dbReference>
<dbReference type="PRINTS" id="PR01043">
    <property type="entry name" value="TRNASYNTHGLY"/>
</dbReference>
<dbReference type="SUPFAM" id="SSF52954">
    <property type="entry name" value="Class II aaRS ABD-related"/>
    <property type="match status" value="1"/>
</dbReference>
<dbReference type="SUPFAM" id="SSF55681">
    <property type="entry name" value="Class II aaRS and biotin synthetases"/>
    <property type="match status" value="1"/>
</dbReference>
<dbReference type="PROSITE" id="PS50862">
    <property type="entry name" value="AA_TRNA_LIGASE_II"/>
    <property type="match status" value="1"/>
</dbReference>
<reference key="1">
    <citation type="journal article" date="2002" name="Proc. Natl. Acad. Sci. U.S.A.">
        <title>The complete genome sequence of Chlorobium tepidum TLS, a photosynthetic, anaerobic, green-sulfur bacterium.</title>
        <authorList>
            <person name="Eisen J.A."/>
            <person name="Nelson K.E."/>
            <person name="Paulsen I.T."/>
            <person name="Heidelberg J.F."/>
            <person name="Wu M."/>
            <person name="Dodson R.J."/>
            <person name="DeBoy R.T."/>
            <person name="Gwinn M.L."/>
            <person name="Nelson W.C."/>
            <person name="Haft D.H."/>
            <person name="Hickey E.K."/>
            <person name="Peterson J.D."/>
            <person name="Durkin A.S."/>
            <person name="Kolonay J.F."/>
            <person name="Yang F."/>
            <person name="Holt I.E."/>
            <person name="Umayam L.A."/>
            <person name="Mason T.M."/>
            <person name="Brenner M."/>
            <person name="Shea T.P."/>
            <person name="Parksey D.S."/>
            <person name="Nierman W.C."/>
            <person name="Feldblyum T.V."/>
            <person name="Hansen C.L."/>
            <person name="Craven M.B."/>
            <person name="Radune D."/>
            <person name="Vamathevan J.J."/>
            <person name="Khouri H.M."/>
            <person name="White O."/>
            <person name="Gruber T.M."/>
            <person name="Ketchum K.A."/>
            <person name="Venter J.C."/>
            <person name="Tettelin H."/>
            <person name="Bryant D.A."/>
            <person name="Fraser C.M."/>
        </authorList>
    </citation>
    <scope>NUCLEOTIDE SEQUENCE [LARGE SCALE GENOMIC DNA]</scope>
    <source>
        <strain>ATCC 49652 / DSM 12025 / NBRC 103806 / TLS</strain>
    </source>
</reference>
<accession>Q8KAB1</accession>
<gene>
    <name evidence="1" type="primary">glyQS</name>
    <name type="synonym">glyS</name>
    <name type="ordered locus">CT2255</name>
</gene>
<proteinExistence type="inferred from homology"/>